<feature type="chain" id="PRO_0000376560" description="Probable cell division protein WhiA">
    <location>
        <begin position="1"/>
        <end position="314"/>
    </location>
</feature>
<feature type="DNA-binding region" description="H-T-H motif" evidence="1">
    <location>
        <begin position="274"/>
        <end position="308"/>
    </location>
</feature>
<name>WHIA_STAAN</name>
<organism>
    <name type="scientific">Staphylococcus aureus (strain N315)</name>
    <dbReference type="NCBI Taxonomy" id="158879"/>
    <lineage>
        <taxon>Bacteria</taxon>
        <taxon>Bacillati</taxon>
        <taxon>Bacillota</taxon>
        <taxon>Bacilli</taxon>
        <taxon>Bacillales</taxon>
        <taxon>Staphylococcaceae</taxon>
        <taxon>Staphylococcus</taxon>
    </lineage>
</organism>
<dbReference type="EMBL" id="BA000018">
    <property type="protein sequence ID" value="BAB41955.1"/>
    <property type="molecule type" value="Genomic_DNA"/>
</dbReference>
<dbReference type="RefSeq" id="WP_000006551.1">
    <property type="nucleotide sequence ID" value="NC_002745.2"/>
</dbReference>
<dbReference type="SMR" id="Q7A6Q6"/>
<dbReference type="EnsemblBacteria" id="BAB41955">
    <property type="protein sequence ID" value="BAB41955"/>
    <property type="gene ID" value="BAB41955"/>
</dbReference>
<dbReference type="KEGG" id="sau:SA0722"/>
<dbReference type="HOGENOM" id="CLU_053282_0_0_9"/>
<dbReference type="GO" id="GO:0003677">
    <property type="term" value="F:DNA binding"/>
    <property type="evidence" value="ECO:0007669"/>
    <property type="project" value="UniProtKB-UniRule"/>
</dbReference>
<dbReference type="GO" id="GO:0051301">
    <property type="term" value="P:cell division"/>
    <property type="evidence" value="ECO:0007669"/>
    <property type="project" value="UniProtKB-UniRule"/>
</dbReference>
<dbReference type="GO" id="GO:0043937">
    <property type="term" value="P:regulation of sporulation"/>
    <property type="evidence" value="ECO:0007669"/>
    <property type="project" value="InterPro"/>
</dbReference>
<dbReference type="FunFam" id="3.10.28.10:FF:000002">
    <property type="entry name" value="Probable cell division protein WhiA"/>
    <property type="match status" value="1"/>
</dbReference>
<dbReference type="Gene3D" id="3.10.28.10">
    <property type="entry name" value="Homing endonucleases"/>
    <property type="match status" value="1"/>
</dbReference>
<dbReference type="HAMAP" id="MF_01420">
    <property type="entry name" value="HTH_type_WhiA"/>
    <property type="match status" value="1"/>
</dbReference>
<dbReference type="InterPro" id="IPR027434">
    <property type="entry name" value="Homing_endonucl"/>
</dbReference>
<dbReference type="InterPro" id="IPR018478">
    <property type="entry name" value="Sporu_reg_WhiA_N_dom"/>
</dbReference>
<dbReference type="InterPro" id="IPR003802">
    <property type="entry name" value="Sporulation_regulator_WhiA"/>
</dbReference>
<dbReference type="InterPro" id="IPR023054">
    <property type="entry name" value="Sporulation_regulator_WhiA_C"/>
</dbReference>
<dbReference type="InterPro" id="IPR039518">
    <property type="entry name" value="WhiA_LAGLIDADG_dom"/>
</dbReference>
<dbReference type="NCBIfam" id="TIGR00647">
    <property type="entry name" value="DNA_bind_WhiA"/>
    <property type="match status" value="1"/>
</dbReference>
<dbReference type="PANTHER" id="PTHR37307">
    <property type="entry name" value="CELL DIVISION PROTEIN WHIA-RELATED"/>
    <property type="match status" value="1"/>
</dbReference>
<dbReference type="PANTHER" id="PTHR37307:SF1">
    <property type="entry name" value="CELL DIVISION PROTEIN WHIA-RELATED"/>
    <property type="match status" value="1"/>
</dbReference>
<dbReference type="Pfam" id="PF02650">
    <property type="entry name" value="HTH_WhiA"/>
    <property type="match status" value="1"/>
</dbReference>
<dbReference type="Pfam" id="PF14527">
    <property type="entry name" value="LAGLIDADG_WhiA"/>
    <property type="match status" value="1"/>
</dbReference>
<dbReference type="Pfam" id="PF10298">
    <property type="entry name" value="WhiA_N"/>
    <property type="match status" value="1"/>
</dbReference>
<dbReference type="SUPFAM" id="SSF55608">
    <property type="entry name" value="Homing endonucleases"/>
    <property type="match status" value="1"/>
</dbReference>
<accession>Q7A6Q6</accession>
<comment type="function">
    <text evidence="1">Involved in cell division and chromosome segregation.</text>
</comment>
<comment type="similarity">
    <text evidence="1">Belongs to the WhiA family.</text>
</comment>
<sequence length="314" mass="35868">MSFASEMKNELTRIDVDEMNAKAELSALIRMNGALSLSNQQFVINVQTENATTARRIYSLIKRVFNVEVEILVRKKMKLKKNNIYICRTKMKAKEILDELGILKDGIFTHEIDHSMIQDDEMRRSYLRGAFLAGGSVNNPETSSYHLEIFSQNESHAEGLTKLMNSYELNAKHLERKKGSITYLKEAEKISDFLSLIGGYQALLKFEDVRIVRDMRNSVNRLVNCETANLNKTVSAAMKQVESIKLIDKEIGIENLPDRLREIARIRVEHQEISLKELGEMVSTGPISKSGVNHRLRKLNDLADKIRNGEQIEL</sequence>
<gene>
    <name evidence="1" type="primary">whiA</name>
    <name type="ordered locus">SA0722</name>
</gene>
<protein>
    <recommendedName>
        <fullName evidence="1">Probable cell division protein WhiA</fullName>
    </recommendedName>
</protein>
<reference key="1">
    <citation type="journal article" date="2001" name="Lancet">
        <title>Whole genome sequencing of meticillin-resistant Staphylococcus aureus.</title>
        <authorList>
            <person name="Kuroda M."/>
            <person name="Ohta T."/>
            <person name="Uchiyama I."/>
            <person name="Baba T."/>
            <person name="Yuzawa H."/>
            <person name="Kobayashi I."/>
            <person name="Cui L."/>
            <person name="Oguchi A."/>
            <person name="Aoki K."/>
            <person name="Nagai Y."/>
            <person name="Lian J.-Q."/>
            <person name="Ito T."/>
            <person name="Kanamori M."/>
            <person name="Matsumaru H."/>
            <person name="Maruyama A."/>
            <person name="Murakami H."/>
            <person name="Hosoyama A."/>
            <person name="Mizutani-Ui Y."/>
            <person name="Takahashi N.K."/>
            <person name="Sawano T."/>
            <person name="Inoue R."/>
            <person name="Kaito C."/>
            <person name="Sekimizu K."/>
            <person name="Hirakawa H."/>
            <person name="Kuhara S."/>
            <person name="Goto S."/>
            <person name="Yabuzaki J."/>
            <person name="Kanehisa M."/>
            <person name="Yamashita A."/>
            <person name="Oshima K."/>
            <person name="Furuya K."/>
            <person name="Yoshino C."/>
            <person name="Shiba T."/>
            <person name="Hattori M."/>
            <person name="Ogasawara N."/>
            <person name="Hayashi H."/>
            <person name="Hiramatsu K."/>
        </authorList>
    </citation>
    <scope>NUCLEOTIDE SEQUENCE [LARGE SCALE GENOMIC DNA]</scope>
    <source>
        <strain>N315</strain>
    </source>
</reference>
<evidence type="ECO:0000255" key="1">
    <source>
        <dbReference type="HAMAP-Rule" id="MF_01420"/>
    </source>
</evidence>
<keyword id="KW-0131">Cell cycle</keyword>
<keyword id="KW-0132">Cell division</keyword>
<keyword id="KW-0238">DNA-binding</keyword>
<proteinExistence type="inferred from homology"/>